<dbReference type="EC" id="6.2.1.-" evidence="2"/>
<dbReference type="EMBL" id="Y15839">
    <property type="protein sequence ID" value="CAA75802.1"/>
    <property type="molecule type" value="Genomic_DNA"/>
</dbReference>
<dbReference type="PIR" id="T43052">
    <property type="entry name" value="T43052"/>
</dbReference>
<dbReference type="SMR" id="O42633"/>
<dbReference type="GO" id="GO:0009898">
    <property type="term" value="C:cytoplasmic side of plasma membrane"/>
    <property type="evidence" value="ECO:0007669"/>
    <property type="project" value="TreeGrafter"/>
</dbReference>
<dbReference type="GO" id="GO:0005811">
    <property type="term" value="C:lipid droplet"/>
    <property type="evidence" value="ECO:0007669"/>
    <property type="project" value="UniProtKB-SubCell"/>
</dbReference>
<dbReference type="GO" id="GO:0005778">
    <property type="term" value="C:peroxisomal membrane"/>
    <property type="evidence" value="ECO:0007669"/>
    <property type="project" value="UniProtKB-SubCell"/>
</dbReference>
<dbReference type="GO" id="GO:0005524">
    <property type="term" value="F:ATP binding"/>
    <property type="evidence" value="ECO:0007669"/>
    <property type="project" value="UniProtKB-KW"/>
</dbReference>
<dbReference type="GO" id="GO:0005324">
    <property type="term" value="F:long-chain fatty acid transmembrane transporter activity"/>
    <property type="evidence" value="ECO:0007669"/>
    <property type="project" value="TreeGrafter"/>
</dbReference>
<dbReference type="GO" id="GO:0004467">
    <property type="term" value="F:long-chain fatty acid-CoA ligase activity"/>
    <property type="evidence" value="ECO:0007669"/>
    <property type="project" value="TreeGrafter"/>
</dbReference>
<dbReference type="GO" id="GO:0044539">
    <property type="term" value="P:long-chain fatty acid import into cell"/>
    <property type="evidence" value="ECO:0007669"/>
    <property type="project" value="TreeGrafter"/>
</dbReference>
<dbReference type="CDD" id="cd05937">
    <property type="entry name" value="FATP_chFAT1_like"/>
    <property type="match status" value="1"/>
</dbReference>
<dbReference type="FunFam" id="3.40.50.12780:FF:000019">
    <property type="entry name" value="Long-chain fatty acid transporter"/>
    <property type="match status" value="1"/>
</dbReference>
<dbReference type="Gene3D" id="3.30.300.30">
    <property type="match status" value="1"/>
</dbReference>
<dbReference type="Gene3D" id="3.40.50.12780">
    <property type="entry name" value="N-terminal domain of ligase-like"/>
    <property type="match status" value="1"/>
</dbReference>
<dbReference type="InterPro" id="IPR045851">
    <property type="entry name" value="AMP-bd_C_sf"/>
</dbReference>
<dbReference type="InterPro" id="IPR020845">
    <property type="entry name" value="AMP-binding_CS"/>
</dbReference>
<dbReference type="InterPro" id="IPR000873">
    <property type="entry name" value="AMP-dep_synth/lig_dom"/>
</dbReference>
<dbReference type="InterPro" id="IPR042099">
    <property type="entry name" value="ANL_N_sf"/>
</dbReference>
<dbReference type="PANTHER" id="PTHR43107:SF15">
    <property type="entry name" value="FATTY ACID TRANSPORT PROTEIN 3, ISOFORM A"/>
    <property type="match status" value="1"/>
</dbReference>
<dbReference type="PANTHER" id="PTHR43107">
    <property type="entry name" value="LONG-CHAIN FATTY ACID TRANSPORT PROTEIN"/>
    <property type="match status" value="1"/>
</dbReference>
<dbReference type="Pfam" id="PF00501">
    <property type="entry name" value="AMP-binding"/>
    <property type="match status" value="1"/>
</dbReference>
<dbReference type="SUPFAM" id="SSF56801">
    <property type="entry name" value="Acetyl-CoA synthetase-like"/>
    <property type="match status" value="1"/>
</dbReference>
<dbReference type="PROSITE" id="PS00455">
    <property type="entry name" value="AMP_BINDING"/>
    <property type="match status" value="1"/>
</dbReference>
<name>FAT1_COCHE</name>
<feature type="chain" id="PRO_0000193180" description="Very long-chain fatty acid transport protein">
    <location>
        <begin position="1"/>
        <end position="643"/>
    </location>
</feature>
<feature type="topological domain" description="Cytoplasmic" evidence="2">
    <location>
        <begin position="1"/>
        <end position="15"/>
    </location>
</feature>
<feature type="transmembrane region" description="Helical" evidence="4">
    <location>
        <begin position="16"/>
        <end position="36"/>
    </location>
</feature>
<feature type="topological domain" description="Extracellular" evidence="2">
    <location>
        <begin position="37"/>
        <end position="138"/>
    </location>
</feature>
<feature type="transmembrane region" description="Helical" evidence="4">
    <location>
        <begin position="139"/>
        <end position="159"/>
    </location>
</feature>
<feature type="topological domain" description="Cytoplasmic" evidence="2">
    <location>
        <begin position="160"/>
        <end position="249"/>
    </location>
</feature>
<feature type="intramembrane region" evidence="2">
    <location>
        <begin position="250"/>
        <end position="318"/>
    </location>
</feature>
<feature type="topological domain" description="Cytoplasmic" evidence="2">
    <location>
        <begin position="319"/>
        <end position="643"/>
    </location>
</feature>
<feature type="short sequence motif" description="FACS" evidence="1">
    <location>
        <begin position="477"/>
        <end position="525"/>
    </location>
</feature>
<feature type="binding site" evidence="3">
    <location>
        <begin position="235"/>
        <end position="246"/>
    </location>
    <ligand>
        <name>ATP</name>
        <dbReference type="ChEBI" id="CHEBI:30616"/>
    </ligand>
</feature>
<proteinExistence type="inferred from homology"/>
<keyword id="KW-0067">ATP-binding</keyword>
<keyword id="KW-1003">Cell membrane</keyword>
<keyword id="KW-0436">Ligase</keyword>
<keyword id="KW-0551">Lipid droplet</keyword>
<keyword id="KW-0445">Lipid transport</keyword>
<keyword id="KW-0472">Membrane</keyword>
<keyword id="KW-0547">Nucleotide-binding</keyword>
<keyword id="KW-0576">Peroxisome</keyword>
<keyword id="KW-0812">Transmembrane</keyword>
<keyword id="KW-1133">Transmembrane helix</keyword>
<keyword id="KW-0813">Transport</keyword>
<reference key="1">
    <citation type="journal article" date="1998" name="FEMS Microbiol. Lett.">
        <title>PKC1, encoding a protein kinase C, and FAT1, encoding a fatty acid transporter protein, are neighbors in Cochliobolus heterostrophus.</title>
        <authorList>
            <person name="Oeser B."/>
        </authorList>
    </citation>
    <scope>NUCLEOTIDE SEQUENCE [GENOMIC DNA]</scope>
    <source>
        <strain>ATCC 48329 / C2</strain>
    </source>
</reference>
<protein>
    <recommendedName>
        <fullName>Very long-chain fatty acid transport protein</fullName>
        <ecNumber evidence="2">6.2.1.-</ecNumber>
    </recommendedName>
    <alternativeName>
        <fullName>Very-long-chain acyl-CoA synthetase</fullName>
        <shortName>VLCS</shortName>
    </alternativeName>
</protein>
<sequence>MACMHQAQLYNDLEELLTGPSVPIVAGAAGAAALTAYINAKYHIAHDLKTLGGGLTQSSEAIDFINRRVAQKRVLTHHIFQEQVQKQSNHPFLIFEGKTWSYKEFSEAYTRVANWLIDELDVQVGEMVAIDGGNSAEHLMLWLALDAIGAATSFLNWNLTGAGLIHCIKLCECRFVIADIDIKANIEPCRGELEETGINIHYYDPSFISSLPNNTPIPDSRTENIELDSVRGLIYTSGTTGLPKGVFISTGRELRTDWSISKYLNLKPTDRMYTCMPLYHAAAHSLCTASVIHGGGTVVLSRKFSHKKFWPEVVASEANIIQYVGELGRYLLNGPKSPYDRAHKVQMAWGNGMRPDVWEAFRERFNIPIIHELYAATDGLGSMTNRNAGPFTANCIALRGLIWHWKFRNQEVLVKMDLDTDEIMRDRNGFAIRCAVNEPGQMLFRLTPETLAGAPSYYNNETATQSRRITDVFQKGDLWFKSGDMLRQDAEGRVYFVDRLGDTFRWKSENVSTNEVADVMGTFPQIAETNVYGVLVPGNDGRVRSLNCHGRRRDRVDIRFAALAKHARDRLPGYAVPLFLRVTPALEYTGTLKIQKGRLKQEGIDPDKISGEDKLYWLPPGSDIYLPFGKMEWQGIVDKRIRL</sequence>
<gene>
    <name type="primary">FAT1</name>
</gene>
<organism>
    <name type="scientific">Cochliobolus heterostrophus</name>
    <name type="common">Southern corn leaf blight fungus</name>
    <name type="synonym">Bipolaris maydis</name>
    <dbReference type="NCBI Taxonomy" id="5016"/>
    <lineage>
        <taxon>Eukaryota</taxon>
        <taxon>Fungi</taxon>
        <taxon>Dikarya</taxon>
        <taxon>Ascomycota</taxon>
        <taxon>Pezizomycotina</taxon>
        <taxon>Dothideomycetes</taxon>
        <taxon>Pleosporomycetidae</taxon>
        <taxon>Pleosporales</taxon>
        <taxon>Pleosporineae</taxon>
        <taxon>Pleosporaceae</taxon>
        <taxon>Bipolaris</taxon>
    </lineage>
</organism>
<comment type="function">
    <text evidence="2">Acyl-CoA synthetase required for both the import of long chain fatty acids (LCFAs) (C14-C18) and the activation very long chain fatty acids (VLCFAs) (C20-C26) by esterification of the fatty acids into metabolically active CoA-thioesters for subsequent degradation or incorporation into phospholipids. The transport and fatty acyl-CoA synthetase activities are genetically separable and are thus independent activities. Esterifies VLCFAs in the peroxisome matrix. The VLCFAs are actively transported into peroxisomes by a PXA1-PXA2 heterodimeric transporter in the peroxisomal membrane.</text>
</comment>
<comment type="catalytic activity">
    <reaction evidence="2">
        <text>a very long-chain fatty acid + ATP + CoA = a very long-chain fatty acyl-CoA + AMP + diphosphate</text>
        <dbReference type="Rhea" id="RHEA:54536"/>
        <dbReference type="ChEBI" id="CHEBI:30616"/>
        <dbReference type="ChEBI" id="CHEBI:33019"/>
        <dbReference type="ChEBI" id="CHEBI:57287"/>
        <dbReference type="ChEBI" id="CHEBI:58950"/>
        <dbReference type="ChEBI" id="CHEBI:138261"/>
        <dbReference type="ChEBI" id="CHEBI:456215"/>
    </reaction>
</comment>
<comment type="subcellular location">
    <subcellularLocation>
        <location evidence="2">Lipid droplet</location>
    </subcellularLocation>
    <subcellularLocation>
        <location evidence="2">Cell membrane</location>
        <topology evidence="4">Multi-pass membrane protein</topology>
    </subcellularLocation>
    <subcellularLocation>
        <location evidence="2">Peroxisome membrane</location>
        <topology evidence="4">Multi-pass membrane protein</topology>
    </subcellularLocation>
    <subcellularLocation>
        <location evidence="2">Peroxisome</location>
    </subcellularLocation>
</comment>
<comment type="domain">
    <text evidence="1">The FACS motif is required for catalytic activity and substrate specificity.</text>
</comment>
<comment type="similarity">
    <text evidence="5">Belongs to the ATP-dependent AMP-binding enzyme family.</text>
</comment>
<accession>O42633</accession>
<evidence type="ECO:0000250" key="1">
    <source>
        <dbReference type="UniProtKB" id="P30624"/>
    </source>
</evidence>
<evidence type="ECO:0000250" key="2">
    <source>
        <dbReference type="UniProtKB" id="P38225"/>
    </source>
</evidence>
<evidence type="ECO:0000250" key="3">
    <source>
        <dbReference type="UniProtKB" id="P69451"/>
    </source>
</evidence>
<evidence type="ECO:0000255" key="4"/>
<evidence type="ECO:0000305" key="5"/>